<feature type="chain" id="PRO_0000413933" description="Negative modulator of initiation of replication">
    <location>
        <begin position="1"/>
        <end position="207"/>
    </location>
</feature>
<feature type="region of interest" description="Disordered" evidence="2">
    <location>
        <begin position="43"/>
        <end position="63"/>
    </location>
</feature>
<feature type="compositionally biased region" description="Polar residues" evidence="2">
    <location>
        <begin position="43"/>
        <end position="54"/>
    </location>
</feature>
<keyword id="KW-0963">Cytoplasm</keyword>
<keyword id="KW-0236">DNA replication inhibitor</keyword>
<keyword id="KW-0238">DNA-binding</keyword>
<keyword id="KW-1185">Reference proteome</keyword>
<proteinExistence type="inferred from homology"/>
<comment type="function">
    <text evidence="1">Negative regulator of replication initiation, which contributes to regulation of DNA replication and ensures that replication initiation occurs exactly once per chromosome per cell cycle. Binds to pairs of hemimethylated GATC sequences in the oriC region, thus preventing assembly of replication proteins and re-initiation at newly replicated origins. Repression is relieved when the region becomes fully methylated.</text>
</comment>
<comment type="subunit">
    <text evidence="1">Homodimer. Polymerizes to form helical filaments.</text>
</comment>
<comment type="subcellular location">
    <subcellularLocation>
        <location evidence="1">Cytoplasm</location>
    </subcellularLocation>
</comment>
<comment type="similarity">
    <text evidence="1">Belongs to the SeqA family.</text>
</comment>
<gene>
    <name evidence="1" type="primary">seqA</name>
    <name type="ordered locus">Ping_0878</name>
</gene>
<organism>
    <name type="scientific">Psychromonas ingrahamii (strain DSM 17664 / CCUG 51855 / 37)</name>
    <dbReference type="NCBI Taxonomy" id="357804"/>
    <lineage>
        <taxon>Bacteria</taxon>
        <taxon>Pseudomonadati</taxon>
        <taxon>Pseudomonadota</taxon>
        <taxon>Gammaproteobacteria</taxon>
        <taxon>Alteromonadales</taxon>
        <taxon>Psychromonadaceae</taxon>
        <taxon>Psychromonas</taxon>
    </lineage>
</organism>
<name>SEQA_PSYIN</name>
<protein>
    <recommendedName>
        <fullName evidence="1">Negative modulator of initiation of replication</fullName>
    </recommendedName>
</protein>
<reference key="1">
    <citation type="journal article" date="2008" name="BMC Genomics">
        <title>Genomics of an extreme psychrophile, Psychromonas ingrahamii.</title>
        <authorList>
            <person name="Riley M."/>
            <person name="Staley J.T."/>
            <person name="Danchin A."/>
            <person name="Wang T.Z."/>
            <person name="Brettin T.S."/>
            <person name="Hauser L.J."/>
            <person name="Land M.L."/>
            <person name="Thompson L.S."/>
        </authorList>
    </citation>
    <scope>NUCLEOTIDE SEQUENCE [LARGE SCALE GENOMIC DNA]</scope>
    <source>
        <strain>DSM 17664 / CCUG 51855 / 37</strain>
    </source>
</reference>
<accession>A1STA5</accession>
<evidence type="ECO:0000255" key="1">
    <source>
        <dbReference type="HAMAP-Rule" id="MF_00908"/>
    </source>
</evidence>
<evidence type="ECO:0000256" key="2">
    <source>
        <dbReference type="SAM" id="MobiDB-lite"/>
    </source>
</evidence>
<sequence length="207" mass="23299">MKNIEIEDDLYKYILANIEAFGETPSQILRRLLSLPNASPDNATPITSSVTPSAPRQEAVNDESSVFEAVTPKVLDRANISLPEPLAHGVNALFDSEVFKTEAVVTNKFMMLLATMYYENKNAFEDAADKTKGRTRDYLGQNLNALLAADSEEEQNFFKASKPRNIPHTPFWVITNANTGRKRIIITQMMASMGYPHYLIERIKEEI</sequence>
<dbReference type="EMBL" id="CP000510">
    <property type="protein sequence ID" value="ABM02720.1"/>
    <property type="molecule type" value="Genomic_DNA"/>
</dbReference>
<dbReference type="RefSeq" id="WP_011769283.1">
    <property type="nucleotide sequence ID" value="NC_008709.1"/>
</dbReference>
<dbReference type="SMR" id="A1STA5"/>
<dbReference type="STRING" id="357804.Ping_0878"/>
<dbReference type="KEGG" id="pin:Ping_0878"/>
<dbReference type="eggNOG" id="COG3057">
    <property type="taxonomic scope" value="Bacteria"/>
</dbReference>
<dbReference type="HOGENOM" id="CLU_099733_0_0_6"/>
<dbReference type="OrthoDB" id="5591069at2"/>
<dbReference type="Proteomes" id="UP000000639">
    <property type="component" value="Chromosome"/>
</dbReference>
<dbReference type="GO" id="GO:0005737">
    <property type="term" value="C:cytoplasm"/>
    <property type="evidence" value="ECO:0007669"/>
    <property type="project" value="UniProtKB-SubCell"/>
</dbReference>
<dbReference type="GO" id="GO:0003677">
    <property type="term" value="F:DNA binding"/>
    <property type="evidence" value="ECO:0007669"/>
    <property type="project" value="UniProtKB-UniRule"/>
</dbReference>
<dbReference type="GO" id="GO:0032297">
    <property type="term" value="P:negative regulation of DNA-templated DNA replication initiation"/>
    <property type="evidence" value="ECO:0007669"/>
    <property type="project" value="UniProtKB-UniRule"/>
</dbReference>
<dbReference type="GO" id="GO:0006355">
    <property type="term" value="P:regulation of DNA-templated transcription"/>
    <property type="evidence" value="ECO:0007669"/>
    <property type="project" value="InterPro"/>
</dbReference>
<dbReference type="Gene3D" id="1.10.1220.10">
    <property type="entry name" value="Met repressor-like"/>
    <property type="match status" value="1"/>
</dbReference>
<dbReference type="Gene3D" id="1.20.1380.10">
    <property type="entry name" value="Replication modulator SeqA, C-terminal DNA-binding domain"/>
    <property type="match status" value="1"/>
</dbReference>
<dbReference type="HAMAP" id="MF_00908">
    <property type="entry name" value="SeqA"/>
    <property type="match status" value="1"/>
</dbReference>
<dbReference type="InterPro" id="IPR013321">
    <property type="entry name" value="Arc_rbn_hlx_hlx"/>
</dbReference>
<dbReference type="InterPro" id="IPR010985">
    <property type="entry name" value="Ribbon_hlx_hlx"/>
</dbReference>
<dbReference type="InterPro" id="IPR005621">
    <property type="entry name" value="SeqA"/>
</dbReference>
<dbReference type="InterPro" id="IPR026577">
    <property type="entry name" value="SeqA_DNA-bd_C"/>
</dbReference>
<dbReference type="InterPro" id="IPR036835">
    <property type="entry name" value="SeqA_DNA-bd_C_sf"/>
</dbReference>
<dbReference type="InterPro" id="IPR033761">
    <property type="entry name" value="SeqA_N"/>
</dbReference>
<dbReference type="Pfam" id="PF03925">
    <property type="entry name" value="SeqA"/>
    <property type="match status" value="1"/>
</dbReference>
<dbReference type="Pfam" id="PF17206">
    <property type="entry name" value="SeqA_N"/>
    <property type="match status" value="1"/>
</dbReference>
<dbReference type="PIRSF" id="PIRSF019401">
    <property type="entry name" value="SeqA"/>
    <property type="match status" value="1"/>
</dbReference>
<dbReference type="SUPFAM" id="SSF82808">
    <property type="entry name" value="Replication modulator SeqA, C-terminal DNA-binding domain"/>
    <property type="match status" value="1"/>
</dbReference>
<dbReference type="SUPFAM" id="SSF47598">
    <property type="entry name" value="Ribbon-helix-helix"/>
    <property type="match status" value="1"/>
</dbReference>